<keyword id="KW-0227">DNA damage</keyword>
<keyword id="KW-0234">DNA repair</keyword>
<protein>
    <recommendedName>
        <fullName evidence="1">DNA mismatch repair protein MutL</fullName>
    </recommendedName>
</protein>
<proteinExistence type="inferred from homology"/>
<feature type="chain" id="PRO_1000192167" description="DNA mismatch repair protein MutL">
    <location>
        <begin position="1"/>
        <end position="575"/>
    </location>
</feature>
<accession>B6J016</accession>
<dbReference type="EMBL" id="CP001019">
    <property type="protein sequence ID" value="ACJ18294.1"/>
    <property type="molecule type" value="Genomic_DNA"/>
</dbReference>
<dbReference type="RefSeq" id="WP_012569998.1">
    <property type="nucleotide sequence ID" value="NC_011527.1"/>
</dbReference>
<dbReference type="SMR" id="B6J016"/>
<dbReference type="KEGG" id="cbg:CbuG_0920"/>
<dbReference type="HOGENOM" id="CLU_004131_4_2_6"/>
<dbReference type="GO" id="GO:0032300">
    <property type="term" value="C:mismatch repair complex"/>
    <property type="evidence" value="ECO:0007669"/>
    <property type="project" value="InterPro"/>
</dbReference>
<dbReference type="GO" id="GO:0005524">
    <property type="term" value="F:ATP binding"/>
    <property type="evidence" value="ECO:0007669"/>
    <property type="project" value="InterPro"/>
</dbReference>
<dbReference type="GO" id="GO:0016887">
    <property type="term" value="F:ATP hydrolysis activity"/>
    <property type="evidence" value="ECO:0007669"/>
    <property type="project" value="InterPro"/>
</dbReference>
<dbReference type="GO" id="GO:0140664">
    <property type="term" value="F:ATP-dependent DNA damage sensor activity"/>
    <property type="evidence" value="ECO:0007669"/>
    <property type="project" value="InterPro"/>
</dbReference>
<dbReference type="GO" id="GO:0030983">
    <property type="term" value="F:mismatched DNA binding"/>
    <property type="evidence" value="ECO:0007669"/>
    <property type="project" value="InterPro"/>
</dbReference>
<dbReference type="GO" id="GO:0006298">
    <property type="term" value="P:mismatch repair"/>
    <property type="evidence" value="ECO:0007669"/>
    <property type="project" value="UniProtKB-UniRule"/>
</dbReference>
<dbReference type="CDD" id="cd16926">
    <property type="entry name" value="HATPase_MutL-MLH-PMS-like"/>
    <property type="match status" value="1"/>
</dbReference>
<dbReference type="CDD" id="cd03482">
    <property type="entry name" value="MutL_Trans_MutL"/>
    <property type="match status" value="1"/>
</dbReference>
<dbReference type="FunFam" id="3.30.230.10:FF:000013">
    <property type="entry name" value="DNA mismatch repair endonuclease MutL"/>
    <property type="match status" value="1"/>
</dbReference>
<dbReference type="FunFam" id="3.30.565.10:FF:000003">
    <property type="entry name" value="DNA mismatch repair endonuclease MutL"/>
    <property type="match status" value="1"/>
</dbReference>
<dbReference type="Gene3D" id="3.30.230.10">
    <property type="match status" value="1"/>
</dbReference>
<dbReference type="Gene3D" id="3.30.565.10">
    <property type="entry name" value="Histidine kinase-like ATPase, C-terminal domain"/>
    <property type="match status" value="1"/>
</dbReference>
<dbReference type="Gene3D" id="3.30.1540.20">
    <property type="entry name" value="MutL, C-terminal domain, dimerisation subdomain"/>
    <property type="match status" value="1"/>
</dbReference>
<dbReference type="Gene3D" id="3.30.1370.100">
    <property type="entry name" value="MutL, C-terminal domain, regulatory subdomain"/>
    <property type="match status" value="1"/>
</dbReference>
<dbReference type="HAMAP" id="MF_00149">
    <property type="entry name" value="DNA_mis_repair"/>
    <property type="match status" value="1"/>
</dbReference>
<dbReference type="InterPro" id="IPR014762">
    <property type="entry name" value="DNA_mismatch_repair_CS"/>
</dbReference>
<dbReference type="InterPro" id="IPR020667">
    <property type="entry name" value="DNA_mismatch_repair_MutL"/>
</dbReference>
<dbReference type="InterPro" id="IPR013507">
    <property type="entry name" value="DNA_mismatch_S5_2-like"/>
</dbReference>
<dbReference type="InterPro" id="IPR036890">
    <property type="entry name" value="HATPase_C_sf"/>
</dbReference>
<dbReference type="InterPro" id="IPR002099">
    <property type="entry name" value="MutL/Mlh/PMS"/>
</dbReference>
<dbReference type="InterPro" id="IPR038973">
    <property type="entry name" value="MutL/Mlh/Pms-like"/>
</dbReference>
<dbReference type="InterPro" id="IPR014790">
    <property type="entry name" value="MutL_C"/>
</dbReference>
<dbReference type="InterPro" id="IPR042120">
    <property type="entry name" value="MutL_C_dimsub"/>
</dbReference>
<dbReference type="InterPro" id="IPR042121">
    <property type="entry name" value="MutL_C_regsub"/>
</dbReference>
<dbReference type="InterPro" id="IPR037198">
    <property type="entry name" value="MutL_C_sf"/>
</dbReference>
<dbReference type="InterPro" id="IPR020568">
    <property type="entry name" value="Ribosomal_Su5_D2-typ_SF"/>
</dbReference>
<dbReference type="InterPro" id="IPR014721">
    <property type="entry name" value="Ribsml_uS5_D2-typ_fold_subgr"/>
</dbReference>
<dbReference type="NCBIfam" id="TIGR00585">
    <property type="entry name" value="mutl"/>
    <property type="match status" value="1"/>
</dbReference>
<dbReference type="PANTHER" id="PTHR10073">
    <property type="entry name" value="DNA MISMATCH REPAIR PROTEIN MLH, PMS, MUTL"/>
    <property type="match status" value="1"/>
</dbReference>
<dbReference type="PANTHER" id="PTHR10073:SF12">
    <property type="entry name" value="DNA MISMATCH REPAIR PROTEIN MLH1"/>
    <property type="match status" value="1"/>
</dbReference>
<dbReference type="Pfam" id="PF01119">
    <property type="entry name" value="DNA_mis_repair"/>
    <property type="match status" value="1"/>
</dbReference>
<dbReference type="Pfam" id="PF13589">
    <property type="entry name" value="HATPase_c_3"/>
    <property type="match status" value="1"/>
</dbReference>
<dbReference type="Pfam" id="PF08676">
    <property type="entry name" value="MutL_C"/>
    <property type="match status" value="1"/>
</dbReference>
<dbReference type="SMART" id="SM01340">
    <property type="entry name" value="DNA_mis_repair"/>
    <property type="match status" value="1"/>
</dbReference>
<dbReference type="SMART" id="SM00853">
    <property type="entry name" value="MutL_C"/>
    <property type="match status" value="1"/>
</dbReference>
<dbReference type="SUPFAM" id="SSF55874">
    <property type="entry name" value="ATPase domain of HSP90 chaperone/DNA topoisomerase II/histidine kinase"/>
    <property type="match status" value="1"/>
</dbReference>
<dbReference type="SUPFAM" id="SSF118116">
    <property type="entry name" value="DNA mismatch repair protein MutL"/>
    <property type="match status" value="1"/>
</dbReference>
<dbReference type="SUPFAM" id="SSF54211">
    <property type="entry name" value="Ribosomal protein S5 domain 2-like"/>
    <property type="match status" value="1"/>
</dbReference>
<dbReference type="PROSITE" id="PS00058">
    <property type="entry name" value="DNA_MISMATCH_REPAIR_1"/>
    <property type="match status" value="1"/>
</dbReference>
<organism>
    <name type="scientific">Coxiella burnetii (strain CbuG_Q212)</name>
    <name type="common">Coxiella burnetii (strain Q212)</name>
    <dbReference type="NCBI Taxonomy" id="434923"/>
    <lineage>
        <taxon>Bacteria</taxon>
        <taxon>Pseudomonadati</taxon>
        <taxon>Pseudomonadota</taxon>
        <taxon>Gammaproteobacteria</taxon>
        <taxon>Legionellales</taxon>
        <taxon>Coxiellaceae</taxon>
        <taxon>Coxiella</taxon>
    </lineage>
</organism>
<gene>
    <name evidence="1" type="primary">mutL</name>
    <name type="ordered locus">CbuG_0920</name>
</gene>
<name>MUTL_COXB2</name>
<evidence type="ECO:0000255" key="1">
    <source>
        <dbReference type="HAMAP-Rule" id="MF_00149"/>
    </source>
</evidence>
<sequence length="575" mass="64775">MMYIRRLNDQTANQIAAGEVVERPASVVKELIENSIDAHASCIRVDILQGGAKQIRIQDDGDGIHPEDLVLALERHATSKIAKIDDLQDVTTLGFRGEALASISAVSRLTLTSRQKNAEMGYRISNISHKIMTPVPAAHPQGTTIDVQDLFYNTPARRKFLRSPATEFQHIRRIIERLALSHFTTEFLLHHNEKEIIHFKSATTISGQENRIKSILGDVFMQSALAIEFSQSGLTLKGYIAEAAYTRSQPDLQYIYVNGRFVRDKLIAQALRQAYHDVLFHGRHPAYVLYLEIDPAFVDINVHPTKHEVRFRDPQWVRDFLIHAVKTALAQTKPGIAHPLPQSTAEYNPITNFAPTPLIEGQGNLSLIQEQPAPYTQTIVHKHPLGHALAQLQGIYILSQNEKGLVIVDMHAAHERILYEKMKKQLAEVGLVMQSLLVPINLSLNPQEITAWQTNKALFARLGFEIESFGPDKIVVRRHPSLLKPKNLENLIRDVLADLITHNTTSRVGERINAVLATLACHAALRAPHYLTIEEMEALLREMEKTEHGGLCNHGRPTWKQFDIAELDTFFLRGQ</sequence>
<comment type="function">
    <text evidence="1">This protein is involved in the repair of mismatches in DNA. It is required for dam-dependent methyl-directed DNA mismatch repair. May act as a 'molecular matchmaker', a protein that promotes the formation of a stable complex between two or more DNA-binding proteins in an ATP-dependent manner without itself being part of a final effector complex.</text>
</comment>
<comment type="similarity">
    <text evidence="1">Belongs to the DNA mismatch repair MutL/HexB family.</text>
</comment>
<reference key="1">
    <citation type="journal article" date="2009" name="Infect. Immun.">
        <title>Comparative genomics reveal extensive transposon-mediated genomic plasticity and diversity among potential effector proteins within the genus Coxiella.</title>
        <authorList>
            <person name="Beare P.A."/>
            <person name="Unsworth N."/>
            <person name="Andoh M."/>
            <person name="Voth D.E."/>
            <person name="Omsland A."/>
            <person name="Gilk S.D."/>
            <person name="Williams K.P."/>
            <person name="Sobral B.W."/>
            <person name="Kupko J.J. III"/>
            <person name="Porcella S.F."/>
            <person name="Samuel J.E."/>
            <person name="Heinzen R.A."/>
        </authorList>
    </citation>
    <scope>NUCLEOTIDE SEQUENCE [LARGE SCALE GENOMIC DNA]</scope>
    <source>
        <strain>CbuG_Q212</strain>
    </source>
</reference>